<dbReference type="EMBL" id="AE008691">
    <property type="protein sequence ID" value="AAM24709.1"/>
    <property type="molecule type" value="Genomic_DNA"/>
</dbReference>
<dbReference type="RefSeq" id="WP_011025751.1">
    <property type="nucleotide sequence ID" value="NC_003869.1"/>
</dbReference>
<dbReference type="SMR" id="Q8R9U5"/>
<dbReference type="STRING" id="273068.TTE1491"/>
<dbReference type="KEGG" id="tte:TTE1491"/>
<dbReference type="eggNOG" id="COG1307">
    <property type="taxonomic scope" value="Bacteria"/>
</dbReference>
<dbReference type="HOGENOM" id="CLU_048251_0_1_9"/>
<dbReference type="OrthoDB" id="9780660at2"/>
<dbReference type="Proteomes" id="UP000000555">
    <property type="component" value="Chromosome"/>
</dbReference>
<dbReference type="GO" id="GO:0008289">
    <property type="term" value="F:lipid binding"/>
    <property type="evidence" value="ECO:0007669"/>
    <property type="project" value="UniProtKB-KW"/>
</dbReference>
<dbReference type="Gene3D" id="3.30.1180.10">
    <property type="match status" value="1"/>
</dbReference>
<dbReference type="Gene3D" id="3.40.50.10170">
    <property type="match status" value="1"/>
</dbReference>
<dbReference type="InterPro" id="IPR003797">
    <property type="entry name" value="DegV"/>
</dbReference>
<dbReference type="InterPro" id="IPR043168">
    <property type="entry name" value="DegV_C"/>
</dbReference>
<dbReference type="InterPro" id="IPR050270">
    <property type="entry name" value="DegV_domain_contain"/>
</dbReference>
<dbReference type="NCBIfam" id="TIGR00762">
    <property type="entry name" value="DegV"/>
    <property type="match status" value="1"/>
</dbReference>
<dbReference type="PANTHER" id="PTHR33434">
    <property type="entry name" value="DEGV DOMAIN-CONTAINING PROTEIN DR_1986-RELATED"/>
    <property type="match status" value="1"/>
</dbReference>
<dbReference type="PANTHER" id="PTHR33434:SF2">
    <property type="entry name" value="FATTY ACID-BINDING PROTEIN TM_1468"/>
    <property type="match status" value="1"/>
</dbReference>
<dbReference type="Pfam" id="PF02645">
    <property type="entry name" value="DegV"/>
    <property type="match status" value="1"/>
</dbReference>
<dbReference type="SUPFAM" id="SSF82549">
    <property type="entry name" value="DAK1/DegV-like"/>
    <property type="match status" value="1"/>
</dbReference>
<dbReference type="PROSITE" id="PS51482">
    <property type="entry name" value="DEGV"/>
    <property type="match status" value="1"/>
</dbReference>
<organism>
    <name type="scientific">Caldanaerobacter subterraneus subsp. tengcongensis (strain DSM 15242 / JCM 11007 / NBRC 100824 / MB4)</name>
    <name type="common">Thermoanaerobacter tengcongensis</name>
    <dbReference type="NCBI Taxonomy" id="273068"/>
    <lineage>
        <taxon>Bacteria</taxon>
        <taxon>Bacillati</taxon>
        <taxon>Bacillota</taxon>
        <taxon>Clostridia</taxon>
        <taxon>Thermoanaerobacterales</taxon>
        <taxon>Thermoanaerobacteraceae</taxon>
        <taxon>Caldanaerobacter</taxon>
    </lineage>
</organism>
<gene>
    <name type="ordered locus">TTE1491</name>
</gene>
<protein>
    <recommendedName>
        <fullName>DegV domain-containing protein TTE1491</fullName>
    </recommendedName>
</protein>
<comment type="function">
    <text evidence="1">May bind long-chain fatty acids, such as palmitate, and may play a role in lipid transport or fatty acid metabolism.</text>
</comment>
<reference key="1">
    <citation type="journal article" date="2002" name="Genome Res.">
        <title>A complete sequence of the T. tengcongensis genome.</title>
        <authorList>
            <person name="Bao Q."/>
            <person name="Tian Y."/>
            <person name="Li W."/>
            <person name="Xu Z."/>
            <person name="Xuan Z."/>
            <person name="Hu S."/>
            <person name="Dong W."/>
            <person name="Yang J."/>
            <person name="Chen Y."/>
            <person name="Xue Y."/>
            <person name="Xu Y."/>
            <person name="Lai X."/>
            <person name="Huang L."/>
            <person name="Dong X."/>
            <person name="Ma Y."/>
            <person name="Ling L."/>
            <person name="Tan H."/>
            <person name="Chen R."/>
            <person name="Wang J."/>
            <person name="Yu J."/>
            <person name="Yang H."/>
        </authorList>
    </citation>
    <scope>NUCLEOTIDE SEQUENCE [LARGE SCALE GENOMIC DNA]</scope>
    <source>
        <strain>DSM 15242 / JCM 11007 / NBRC 100824 / MB4</strain>
    </source>
</reference>
<accession>Q8R9U5</accession>
<proteinExistence type="inferred from homology"/>
<keyword id="KW-0446">Lipid-binding</keyword>
<keyword id="KW-1185">Reference proteome</keyword>
<sequence>MEKIAIVTDSLSDIPEDLIKTYGIFVVPLTINIDGKSYKDGVDIKKEEFYKLLREGKMPTTTQASPVEFMEVFEDLLKSFDYVIAIILTSKFSGTYQSAVIARDMVDKNRIEVIDSRHFTLGNGMLVLKAARMAVEGASKEEIVSTVYETIPRIRGIMVFDSLDYLYRGGRLSRTQSIIGGILNVKPILTNEDGELKVIDKVRGQKKAIRWIIDYMKNTGIDFAEREVGLIHTDKEEFLNEIEAALRSELEITRFIRSQAGCGIGTHAGPDAAGVFFEEK</sequence>
<name>Y1491_CALS4</name>
<feature type="chain" id="PRO_0000209818" description="DegV domain-containing protein TTE1491">
    <location>
        <begin position="1"/>
        <end position="280"/>
    </location>
</feature>
<feature type="domain" description="DegV" evidence="3">
    <location>
        <begin position="4"/>
        <end position="279"/>
    </location>
</feature>
<feature type="binding site" evidence="2">
    <location>
        <position position="61"/>
    </location>
    <ligand>
        <name>hexadecanoate</name>
        <dbReference type="ChEBI" id="CHEBI:7896"/>
    </ligand>
</feature>
<feature type="binding site" evidence="2">
    <location>
        <position position="93"/>
    </location>
    <ligand>
        <name>hexadecanoate</name>
        <dbReference type="ChEBI" id="CHEBI:7896"/>
    </ligand>
</feature>
<evidence type="ECO:0000250" key="1"/>
<evidence type="ECO:0000250" key="2">
    <source>
        <dbReference type="UniProtKB" id="Q9X1H9"/>
    </source>
</evidence>
<evidence type="ECO:0000255" key="3">
    <source>
        <dbReference type="PROSITE-ProRule" id="PRU00815"/>
    </source>
</evidence>